<sequence>MAFHKLVKNSAYYSRFQTKFKRRRQGKTDYYARKRLITQAKNKYNAPKYRLVVRFTNRDIITQMVTSEINGDKIFAAAYSHELRAYGINHGLTNWAAAYATGLLLARRVLAKLGLDKTFTGVEEPNGEYTLTEAAETEDGERRPFKAILDVGLARTSTGARVFGVMKGASDGGIFIPHSENRFPGYDIETEELDTEVLKKYIYGGHVAEYMETLADDDEERYKSQFVKYIEDDVEADSLEELYAEAHKQIRADPFRKYVSDAPKKSKEEWKAESLKYKKAKLSREERKARVEAKIKQLLAEQDE</sequence>
<name>RL5_CHATD</name>
<proteinExistence type="evidence at protein level"/>
<comment type="function">
    <text evidence="1">Component of the ribosome, a large ribonucleoprotein complex responsible for the synthesis of proteins in the cell (PubMed:37291423). The small ribosomal subunit (SSU) binds messenger RNAs (mRNAs) and translates the encoded message by selecting cognate aminoacyl-transfer RNA (tRNA) molecules. The large subunit (LSU) contains the ribosomal catalytic site termed the peptidyl transferase center (PTC), which catalyzes the formation of peptide bonds, thereby polymerizing the amino acids delivered by tRNAs into a polypeptide chain. The nascent polypeptides leave the ribosome through a tunnel in the LSU and interact with protein factors that function in enzymatic processing, targeting, and the membrane insertion of nascent chains at the exit of the ribosomal tunnel.</text>
</comment>
<comment type="subunit">
    <text evidence="1">Component of a hexameric 5S RNP precursor complex, composed of 5S RNA, RRS1, RPF2, RPL5, RPL11 and SYO1; this complex acts as a precursor for ribosome assembly.</text>
</comment>
<comment type="subcellular location">
    <subcellularLocation>
        <location evidence="3">Cytoplasm</location>
    </subcellularLocation>
</comment>
<comment type="similarity">
    <text evidence="2">Belongs to the universal ribosomal protein uL18 family.</text>
</comment>
<accession>G0SEG2</accession>
<protein>
    <recommendedName>
        <fullName evidence="3">Large ribosomal subunit protein uL18</fullName>
    </recommendedName>
    <alternativeName>
        <fullName evidence="3">60S ribosomal protein L5</fullName>
        <shortName evidence="3">ctRPL5</shortName>
    </alternativeName>
</protein>
<dbReference type="EMBL" id="GL988046">
    <property type="protein sequence ID" value="EGS18339.1"/>
    <property type="molecule type" value="Genomic_DNA"/>
</dbReference>
<dbReference type="RefSeq" id="XP_006696670.1">
    <property type="nucleotide sequence ID" value="XM_006696607.1"/>
</dbReference>
<dbReference type="PDB" id="4GMN">
    <property type="method" value="X-ray"/>
    <property type="resolution" value="2.95 A"/>
    <property type="chains" value="B=1-45"/>
</dbReference>
<dbReference type="PDB" id="5AFF">
    <property type="method" value="X-ray"/>
    <property type="resolution" value="3.40 A"/>
    <property type="chains" value="B=1-41"/>
</dbReference>
<dbReference type="PDB" id="7OLC">
    <property type="method" value="EM"/>
    <property type="resolution" value="2.90 A"/>
    <property type="chains" value="LD=1-304"/>
</dbReference>
<dbReference type="PDB" id="7OLD">
    <property type="method" value="EM"/>
    <property type="resolution" value="3.00 A"/>
    <property type="chains" value="LD=1-304"/>
</dbReference>
<dbReference type="PDB" id="7OZS">
    <property type="method" value="EM"/>
    <property type="resolution" value="3.50 A"/>
    <property type="chains" value="A=1-304"/>
</dbReference>
<dbReference type="PDB" id="7Z3N">
    <property type="method" value="EM"/>
    <property type="resolution" value="3.20 A"/>
    <property type="chains" value="LD=1-304"/>
</dbReference>
<dbReference type="PDB" id="7Z3O">
    <property type="method" value="EM"/>
    <property type="resolution" value="3.30 A"/>
    <property type="chains" value="LD=1-304"/>
</dbReference>
<dbReference type="PDB" id="8I9R">
    <property type="method" value="EM"/>
    <property type="resolution" value="3.10 A"/>
    <property type="chains" value="LD=1-304"/>
</dbReference>
<dbReference type="PDB" id="8OO0">
    <property type="method" value="EM"/>
    <property type="resolution" value="3.10 A"/>
    <property type="chains" value="LD=1-304"/>
</dbReference>
<dbReference type="PDB" id="8PV1">
    <property type="method" value="EM"/>
    <property type="resolution" value="2.56 A"/>
    <property type="chains" value="LD=1-304"/>
</dbReference>
<dbReference type="PDB" id="8PV2">
    <property type="method" value="EM"/>
    <property type="resolution" value="2.63 A"/>
    <property type="chains" value="LD=1-304"/>
</dbReference>
<dbReference type="PDB" id="8PV3">
    <property type="method" value="EM"/>
    <property type="resolution" value="2.80 A"/>
    <property type="chains" value="LD=1-304"/>
</dbReference>
<dbReference type="PDB" id="8PV4">
    <property type="method" value="EM"/>
    <property type="resolution" value="2.90 A"/>
    <property type="chains" value="LD=1-304"/>
</dbReference>
<dbReference type="PDB" id="8PV5">
    <property type="method" value="EM"/>
    <property type="resolution" value="2.86 A"/>
    <property type="chains" value="LD=1-304"/>
</dbReference>
<dbReference type="PDB" id="8PV6">
    <property type="method" value="EM"/>
    <property type="resolution" value="2.94 A"/>
    <property type="chains" value="LD=1-304"/>
</dbReference>
<dbReference type="PDB" id="8PV7">
    <property type="method" value="EM"/>
    <property type="resolution" value="2.12 A"/>
    <property type="chains" value="LD=1-304"/>
</dbReference>
<dbReference type="PDB" id="8PV8">
    <property type="method" value="EM"/>
    <property type="resolution" value="2.91 A"/>
    <property type="chains" value="LD=1-304"/>
</dbReference>
<dbReference type="PDB" id="8PVK">
    <property type="method" value="EM"/>
    <property type="resolution" value="2.55 A"/>
    <property type="chains" value="LD=1-304"/>
</dbReference>
<dbReference type="PDB" id="8PVL">
    <property type="method" value="EM"/>
    <property type="resolution" value="2.19 A"/>
    <property type="chains" value="LD=1-304"/>
</dbReference>
<dbReference type="PDBsum" id="4GMN"/>
<dbReference type="PDBsum" id="5AFF"/>
<dbReference type="PDBsum" id="7OLC"/>
<dbReference type="PDBsum" id="7OLD"/>
<dbReference type="PDBsum" id="7OZS"/>
<dbReference type="PDBsum" id="7Z3N"/>
<dbReference type="PDBsum" id="7Z3O"/>
<dbReference type="PDBsum" id="8I9R"/>
<dbReference type="PDBsum" id="8OO0"/>
<dbReference type="PDBsum" id="8PV1"/>
<dbReference type="PDBsum" id="8PV2"/>
<dbReference type="PDBsum" id="8PV3"/>
<dbReference type="PDBsum" id="8PV4"/>
<dbReference type="PDBsum" id="8PV5"/>
<dbReference type="PDBsum" id="8PV6"/>
<dbReference type="PDBsum" id="8PV7"/>
<dbReference type="PDBsum" id="8PV8"/>
<dbReference type="PDBsum" id="8PVK"/>
<dbReference type="PDBsum" id="8PVL"/>
<dbReference type="EMDB" id="EMD-13093"/>
<dbReference type="EMDB" id="EMD-13134"/>
<dbReference type="EMDB" id="EMD-17004"/>
<dbReference type="EMDB" id="EMD-17950"/>
<dbReference type="EMDB" id="EMD-17951"/>
<dbReference type="EMDB" id="EMD-17952"/>
<dbReference type="EMDB" id="EMD-17953"/>
<dbReference type="EMDB" id="EMD-17954"/>
<dbReference type="EMDB" id="EMD-17955"/>
<dbReference type="EMDB" id="EMD-17956"/>
<dbReference type="EMDB" id="EMD-17957"/>
<dbReference type="EMDB" id="EMD-17969"/>
<dbReference type="EMDB" id="EMD-17970"/>
<dbReference type="EMDB" id="EMD-35281"/>
<dbReference type="SMR" id="G0SEG2"/>
<dbReference type="STRING" id="759272.G0SEG2"/>
<dbReference type="KEGG" id="cthr:CTHT_0063640"/>
<dbReference type="eggNOG" id="KOG0875">
    <property type="taxonomic scope" value="Eukaryota"/>
</dbReference>
<dbReference type="HOGENOM" id="CLU_056222_1_0_1"/>
<dbReference type="OMA" id="CQIASAH"/>
<dbReference type="OrthoDB" id="1618453at2759"/>
<dbReference type="EvolutionaryTrace" id="G0SEG2"/>
<dbReference type="Proteomes" id="UP000008066">
    <property type="component" value="Unassembled WGS sequence"/>
</dbReference>
<dbReference type="GO" id="GO:0022625">
    <property type="term" value="C:cytosolic large ribosomal subunit"/>
    <property type="evidence" value="ECO:0007669"/>
    <property type="project" value="TreeGrafter"/>
</dbReference>
<dbReference type="GO" id="GO:0008097">
    <property type="term" value="F:5S rRNA binding"/>
    <property type="evidence" value="ECO:0007669"/>
    <property type="project" value="InterPro"/>
</dbReference>
<dbReference type="GO" id="GO:0003735">
    <property type="term" value="F:structural constituent of ribosome"/>
    <property type="evidence" value="ECO:0007669"/>
    <property type="project" value="InterPro"/>
</dbReference>
<dbReference type="GO" id="GO:0000027">
    <property type="term" value="P:ribosomal large subunit assembly"/>
    <property type="evidence" value="ECO:0007669"/>
    <property type="project" value="TreeGrafter"/>
</dbReference>
<dbReference type="GO" id="GO:0006412">
    <property type="term" value="P:translation"/>
    <property type="evidence" value="ECO:0007669"/>
    <property type="project" value="InterPro"/>
</dbReference>
<dbReference type="CDD" id="cd00432">
    <property type="entry name" value="Ribosomal_L18_L5e"/>
    <property type="match status" value="1"/>
</dbReference>
<dbReference type="FunFam" id="3.30.420.100:FF:000002">
    <property type="entry name" value="60S ribosomal protein L5"/>
    <property type="match status" value="1"/>
</dbReference>
<dbReference type="Gene3D" id="3.30.420.100">
    <property type="match status" value="1"/>
</dbReference>
<dbReference type="HAMAP" id="MF_01337_A">
    <property type="entry name" value="Ribosomal_uL18_A"/>
    <property type="match status" value="1"/>
</dbReference>
<dbReference type="InterPro" id="IPR005485">
    <property type="entry name" value="Rbsml_uL18_euk"/>
</dbReference>
<dbReference type="InterPro" id="IPR025607">
    <property type="entry name" value="Ribosomal_uL18_C_euk"/>
</dbReference>
<dbReference type="PANTHER" id="PTHR23410:SF12">
    <property type="entry name" value="LARGE RIBOSOMAL SUBUNIT PROTEIN UL18"/>
    <property type="match status" value="1"/>
</dbReference>
<dbReference type="PANTHER" id="PTHR23410">
    <property type="entry name" value="RIBOSOMAL PROTEIN L5-RELATED"/>
    <property type="match status" value="1"/>
</dbReference>
<dbReference type="Pfam" id="PF14204">
    <property type="entry name" value="Ribosomal_L18_c"/>
    <property type="match status" value="1"/>
</dbReference>
<dbReference type="Pfam" id="PF17144">
    <property type="entry name" value="Ribosomal_L5e"/>
    <property type="match status" value="1"/>
</dbReference>
<dbReference type="PRINTS" id="PR00058">
    <property type="entry name" value="RIBOSOMALL5"/>
</dbReference>
<dbReference type="SUPFAM" id="SSF53137">
    <property type="entry name" value="Translational machinery components"/>
    <property type="match status" value="1"/>
</dbReference>
<reference key="1">
    <citation type="journal article" date="2011" name="Cell">
        <title>Insight into structure and assembly of the nuclear pore complex by utilizing the genome of a eukaryotic thermophile.</title>
        <authorList>
            <person name="Amlacher S."/>
            <person name="Sarges P."/>
            <person name="Flemming D."/>
            <person name="van Noort V."/>
            <person name="Kunze R."/>
            <person name="Devos D.P."/>
            <person name="Arumugam M."/>
            <person name="Bork P."/>
            <person name="Hurt E."/>
        </authorList>
    </citation>
    <scope>NUCLEOTIDE SEQUENCE [LARGE SCALE GENOMIC DNA]</scope>
    <source>
        <strain>DSM 1495 / CBS 144.50 / IMI 039719</strain>
    </source>
</reference>
<reference evidence="5" key="2">
    <citation type="journal article" date="2012" name="Science">
        <title>Synchronizing nuclear import of ribosomal proteins with ribosome assembly.</title>
        <authorList>
            <person name="Kressler D."/>
            <person name="Bange G."/>
            <person name="Ogawa Y."/>
            <person name="Stjepanovic G."/>
            <person name="Bradatsch B."/>
            <person name="Pratte D."/>
            <person name="Amlacher S."/>
            <person name="Strauss D."/>
            <person name="Yoneda Y."/>
            <person name="Katahira J."/>
            <person name="Sinning I."/>
            <person name="Hurt E."/>
        </authorList>
    </citation>
    <scope>X-RAY CRYSTALLOGRAPHY (2.95 ANGSTROMS) OF 1-41</scope>
</reference>
<reference evidence="6" key="3">
    <citation type="journal article" date="2015" name="Nat. Commun.">
        <title>Symportin 1 chaperones 5S RNP assembly during ribosome biogenesis by occupying an essential rRNA-binding site.</title>
        <authorList>
            <person name="Calvino F.R."/>
            <person name="Kharde S."/>
            <person name="Ori A."/>
            <person name="Hendricks A."/>
            <person name="Wild K."/>
            <person name="Kressler D."/>
            <person name="Bange G."/>
            <person name="Hurt E."/>
            <person name="Beck M."/>
            <person name="Sinning I."/>
        </authorList>
    </citation>
    <scope>X-RAY CRYSTALLOGRAPHY (3.40 ANGSTROMS) OF 1-41</scope>
</reference>
<reference evidence="7 8" key="4">
    <citation type="journal article" date="2022" name="Nat. Commun.">
        <title>High-resolution structures of a thermophilic eukaryotic 80S ribosome reveal atomistic details of translocation.</title>
        <authorList>
            <person name="Kisonaite M."/>
            <person name="Wild K."/>
            <person name="Lapouge K."/>
            <person name="Ruppert T."/>
            <person name="Sinning I."/>
        </authorList>
    </citation>
    <scope>STRUCTURE BY ELECTRON MICROSCOPY (2.90 ANGSTROMS)</scope>
</reference>
<reference evidence="12" key="5">
    <citation type="journal article" date="2023" name="EMBO Rep.">
        <title>Mechanism of 5S RNP recruitment and helicase-surveilled rRNA maturation during pre-60S biogenesis.</title>
        <authorList>
            <person name="Lau B."/>
            <person name="Huang Z."/>
            <person name="Kellner N."/>
            <person name="Niu S."/>
            <person name="Berninghausen O."/>
            <person name="Beckmann R."/>
            <person name="Hurt E."/>
            <person name="Cheng J."/>
        </authorList>
    </citation>
    <scope>STRUCTURE BY ELECTRON MICROSCOPY (3.10 ANGSTROMS)</scope>
</reference>
<reference evidence="14 15 16 17 18 19 20 21 22 23" key="6">
    <citation type="journal article" date="2023" name="EMBO Rep.">
        <title>Structural insights into coordinating 5S RNP rotation with ITS2 pre-RNA processing during ribosome formation.</title>
        <authorList>
            <person name="Thoms M."/>
            <person name="Lau B."/>
            <person name="Cheng J."/>
            <person name="Fromm L."/>
            <person name="Denk T."/>
            <person name="Kellner N."/>
            <person name="Flemming D."/>
            <person name="Fischer P."/>
            <person name="Falquet L."/>
            <person name="Berninghausen O."/>
            <person name="Beckmann R."/>
            <person name="Hurt E."/>
        </authorList>
    </citation>
    <scope>STRUCTURE BY ELECTRON MICROSCOPY (2.12 ANGSTROMS)</scope>
</reference>
<reference evidence="10 11" key="7">
    <citation type="journal article" date="2023" name="Nat. Struct. Mol. Biol.">
        <title>Structural inventory of cotranslational protein folding by the eukaryotic RAC complex.</title>
        <authorList>
            <person name="Kisonaite M."/>
            <person name="Wild K."/>
            <person name="Lapouge K."/>
            <person name="Gese G.V."/>
            <person name="Kellner N."/>
            <person name="Hurt E."/>
            <person name="Sinning I."/>
        </authorList>
    </citation>
    <scope>STRUCTURE BY ELECTRON MICROSCOPY (3.20 ANGSTROMS)</scope>
</reference>
<reference evidence="9" key="8">
    <citation type="journal article" date="2023" name="Nat. Struct. Mol. Biol.">
        <title>Structure of nascent 5S RNPs at the crossroad between ribosome assembly and MDM2-p53 pathways.</title>
        <authorList>
            <person name="Castillo Duque de Estrada N.M."/>
            <person name="Thoms M."/>
            <person name="Flemming D."/>
            <person name="Hammaren H.M."/>
            <person name="Buschauer R."/>
            <person name="Ameismeier M."/>
            <person name="Bassler J."/>
            <person name="Beck M."/>
            <person name="Beckmann R."/>
            <person name="Hurt E."/>
        </authorList>
    </citation>
    <scope>STRUCTURE BY ELECTRON MICROSCOPY (3.50 ANGSTROMS) IN COMPLEX WITH RPL11; RRS1; RPF2; SYO1 AND 5S RNA</scope>
    <scope>FUNCTION</scope>
    <scope>SUBUNIT</scope>
</reference>
<reference evidence="13" key="9">
    <citation type="journal article" date="2024" name="Nat. Commun.">
        <title>Methionine aminopeptidase 2 and its autoproteolysis product have different binding sites on the ribosome.</title>
        <authorList>
            <person name="Klein M.A."/>
            <person name="Wild K."/>
            <person name="Kisonaite M."/>
            <person name="Sinning I."/>
        </authorList>
    </citation>
    <scope>STRUCTURE BY ELECTRON MICROSCOPY (3.10 ANGSTROMS)</scope>
</reference>
<feature type="chain" id="PRO_0000461685" description="Large ribosomal subunit protein uL18">
    <location>
        <begin position="1"/>
        <end position="304"/>
    </location>
</feature>
<feature type="helix" evidence="24">
    <location>
        <begin position="10"/>
        <end position="16"/>
    </location>
</feature>
<feature type="helix" evidence="25">
    <location>
        <begin position="21"/>
        <end position="24"/>
    </location>
</feature>
<feature type="helix" evidence="25">
    <location>
        <begin position="30"/>
        <end position="39"/>
    </location>
</feature>
<feature type="turn" evidence="25">
    <location>
        <begin position="40"/>
        <end position="45"/>
    </location>
</feature>
<feature type="strand" evidence="25">
    <location>
        <begin position="50"/>
        <end position="52"/>
    </location>
</feature>
<feature type="strand" evidence="25">
    <location>
        <begin position="60"/>
        <end position="62"/>
    </location>
</feature>
<feature type="strand" evidence="25">
    <location>
        <begin position="65"/>
        <end position="67"/>
    </location>
</feature>
<feature type="strand" evidence="25">
    <location>
        <begin position="72"/>
        <end position="75"/>
    </location>
</feature>
<feature type="strand" evidence="25">
    <location>
        <begin position="78"/>
        <end position="81"/>
    </location>
</feature>
<feature type="helix" evidence="25">
    <location>
        <begin position="82"/>
        <end position="85"/>
    </location>
</feature>
<feature type="strand" evidence="25">
    <location>
        <begin position="92"/>
        <end position="94"/>
    </location>
</feature>
<feature type="helix" evidence="25">
    <location>
        <begin position="95"/>
        <end position="112"/>
    </location>
</feature>
<feature type="strand" evidence="25">
    <location>
        <begin position="148"/>
        <end position="150"/>
    </location>
</feature>
<feature type="helix" evidence="25">
    <location>
        <begin position="161"/>
        <end position="172"/>
    </location>
</feature>
<feature type="strand" evidence="25">
    <location>
        <begin position="182"/>
        <end position="186"/>
    </location>
</feature>
<feature type="strand" evidence="25">
    <location>
        <begin position="188"/>
        <end position="190"/>
    </location>
</feature>
<feature type="helix" evidence="25">
    <location>
        <begin position="195"/>
        <end position="202"/>
    </location>
</feature>
<feature type="helix" evidence="25">
    <location>
        <begin position="205"/>
        <end position="216"/>
    </location>
</feature>
<feature type="helix" evidence="25">
    <location>
        <begin position="220"/>
        <end position="224"/>
    </location>
</feature>
<feature type="helix" evidence="25">
    <location>
        <begin position="227"/>
        <end position="231"/>
    </location>
</feature>
<feature type="helix" evidence="25">
    <location>
        <begin position="236"/>
        <end position="252"/>
    </location>
</feature>
<feature type="helix" evidence="25">
    <location>
        <begin position="268"/>
        <end position="275"/>
    </location>
</feature>
<feature type="helix" evidence="25">
    <location>
        <begin position="284"/>
        <end position="297"/>
    </location>
</feature>
<gene>
    <name evidence="4" type="ORF">HT_0063640</name>
</gene>
<organism>
    <name type="scientific">Chaetomium thermophilum (strain DSM 1495 / CBS 144.50 / IMI 039719)</name>
    <name type="common">Thermochaetoides thermophila</name>
    <dbReference type="NCBI Taxonomy" id="759272"/>
    <lineage>
        <taxon>Eukaryota</taxon>
        <taxon>Fungi</taxon>
        <taxon>Dikarya</taxon>
        <taxon>Ascomycota</taxon>
        <taxon>Pezizomycotina</taxon>
        <taxon>Sordariomycetes</taxon>
        <taxon>Sordariomycetidae</taxon>
        <taxon>Sordariales</taxon>
        <taxon>Chaetomiaceae</taxon>
        <taxon>Thermochaetoides</taxon>
    </lineage>
</organism>
<evidence type="ECO:0000269" key="1">
    <source>
    </source>
</evidence>
<evidence type="ECO:0000305" key="2"/>
<evidence type="ECO:0000305" key="3">
    <source>
    </source>
</evidence>
<evidence type="ECO:0000312" key="4">
    <source>
        <dbReference type="EMBL" id="EGS18339.1"/>
    </source>
</evidence>
<evidence type="ECO:0007744" key="5">
    <source>
        <dbReference type="PDB" id="4GMN"/>
    </source>
</evidence>
<evidence type="ECO:0007744" key="6">
    <source>
        <dbReference type="PDB" id="5AFF"/>
    </source>
</evidence>
<evidence type="ECO:0007744" key="7">
    <source>
        <dbReference type="PDB" id="7OLC"/>
    </source>
</evidence>
<evidence type="ECO:0007744" key="8">
    <source>
        <dbReference type="PDB" id="7OLD"/>
    </source>
</evidence>
<evidence type="ECO:0007744" key="9">
    <source>
        <dbReference type="PDB" id="7OZS"/>
    </source>
</evidence>
<evidence type="ECO:0007744" key="10">
    <source>
        <dbReference type="PDB" id="7Z3N"/>
    </source>
</evidence>
<evidence type="ECO:0007744" key="11">
    <source>
        <dbReference type="PDB" id="7Z3O"/>
    </source>
</evidence>
<evidence type="ECO:0007744" key="12">
    <source>
        <dbReference type="PDB" id="8I9R"/>
    </source>
</evidence>
<evidence type="ECO:0007744" key="13">
    <source>
        <dbReference type="PDB" id="8OO0"/>
    </source>
</evidence>
<evidence type="ECO:0007744" key="14">
    <source>
        <dbReference type="PDB" id="8PV1"/>
    </source>
</evidence>
<evidence type="ECO:0007744" key="15">
    <source>
        <dbReference type="PDB" id="8PV2"/>
    </source>
</evidence>
<evidence type="ECO:0007744" key="16">
    <source>
        <dbReference type="PDB" id="8PV3"/>
    </source>
</evidence>
<evidence type="ECO:0007744" key="17">
    <source>
        <dbReference type="PDB" id="8PV4"/>
    </source>
</evidence>
<evidence type="ECO:0007744" key="18">
    <source>
        <dbReference type="PDB" id="8PV5"/>
    </source>
</evidence>
<evidence type="ECO:0007744" key="19">
    <source>
        <dbReference type="PDB" id="8PV6"/>
    </source>
</evidence>
<evidence type="ECO:0007744" key="20">
    <source>
        <dbReference type="PDB" id="8PV7"/>
    </source>
</evidence>
<evidence type="ECO:0007744" key="21">
    <source>
        <dbReference type="PDB" id="8PV8"/>
    </source>
</evidence>
<evidence type="ECO:0007744" key="22">
    <source>
        <dbReference type="PDB" id="8PVK"/>
    </source>
</evidence>
<evidence type="ECO:0007744" key="23">
    <source>
        <dbReference type="PDB" id="8PVL"/>
    </source>
</evidence>
<evidence type="ECO:0007829" key="24">
    <source>
        <dbReference type="PDB" id="4GMN"/>
    </source>
</evidence>
<evidence type="ECO:0007829" key="25">
    <source>
        <dbReference type="PDB" id="7OZS"/>
    </source>
</evidence>
<keyword id="KW-0002">3D-structure</keyword>
<keyword id="KW-0963">Cytoplasm</keyword>
<keyword id="KW-1185">Reference proteome</keyword>
<keyword id="KW-0687">Ribonucleoprotein</keyword>
<keyword id="KW-0689">Ribosomal protein</keyword>